<feature type="chain" id="PRO_0000141660" description="Cobalt-precorrin-5B C(1)-methyltransferase">
    <location>
        <begin position="1"/>
        <end position="377"/>
    </location>
</feature>
<feature type="region of interest" description="Disordered" evidence="2">
    <location>
        <begin position="1"/>
        <end position="21"/>
    </location>
</feature>
<proteinExistence type="inferred from homology"/>
<organism>
    <name type="scientific">Chromobacterium violaceum (strain ATCC 12472 / DSM 30191 / JCM 1249 / CCUG 213 / NBRC 12614 / NCIMB 9131 / NCTC 9757 / MK)</name>
    <dbReference type="NCBI Taxonomy" id="243365"/>
    <lineage>
        <taxon>Bacteria</taxon>
        <taxon>Pseudomonadati</taxon>
        <taxon>Pseudomonadota</taxon>
        <taxon>Betaproteobacteria</taxon>
        <taxon>Neisseriales</taxon>
        <taxon>Chromobacteriaceae</taxon>
        <taxon>Chromobacterium</taxon>
    </lineage>
</organism>
<keyword id="KW-0169">Cobalamin biosynthesis</keyword>
<keyword id="KW-0489">Methyltransferase</keyword>
<keyword id="KW-1185">Reference proteome</keyword>
<keyword id="KW-0949">S-adenosyl-L-methionine</keyword>
<keyword id="KW-0808">Transferase</keyword>
<name>CBID_CHRVO</name>
<protein>
    <recommendedName>
        <fullName evidence="1">Cobalt-precorrin-5B C(1)-methyltransferase</fullName>
        <ecNumber evidence="1">2.1.1.195</ecNumber>
    </recommendedName>
    <alternativeName>
        <fullName evidence="1">Cobalt-precorrin-6A synthase</fullName>
    </alternativeName>
</protein>
<reference key="1">
    <citation type="journal article" date="2003" name="Proc. Natl. Acad. Sci. U.S.A.">
        <title>The complete genome sequence of Chromobacterium violaceum reveals remarkable and exploitable bacterial adaptability.</title>
        <authorList>
            <person name="Vasconcelos A.T.R."/>
            <person name="de Almeida D.F."/>
            <person name="Hungria M."/>
            <person name="Guimaraes C.T."/>
            <person name="Antonio R.V."/>
            <person name="Almeida F.C."/>
            <person name="de Almeida L.G.P."/>
            <person name="de Almeida R."/>
            <person name="Alves-Gomes J.A."/>
            <person name="Andrade E.M."/>
            <person name="Araripe J."/>
            <person name="de Araujo M.F.F."/>
            <person name="Astolfi-Filho S."/>
            <person name="Azevedo V."/>
            <person name="Baptista A.J."/>
            <person name="Bataus L.A.M."/>
            <person name="Batista J.S."/>
            <person name="Belo A."/>
            <person name="van den Berg C."/>
            <person name="Bogo M."/>
            <person name="Bonatto S."/>
            <person name="Bordignon J."/>
            <person name="Brigido M.M."/>
            <person name="Brito C.A."/>
            <person name="Brocchi M."/>
            <person name="Burity H.A."/>
            <person name="Camargo A.A."/>
            <person name="Cardoso D.D.P."/>
            <person name="Carneiro N.P."/>
            <person name="Carraro D.M."/>
            <person name="Carvalho C.M.B."/>
            <person name="Cascardo J.C.M."/>
            <person name="Cavada B.S."/>
            <person name="Chueire L.M.O."/>
            <person name="Creczynski-Pasa T.B."/>
            <person name="Cunha-Junior N.C."/>
            <person name="Fagundes N."/>
            <person name="Falcao C.L."/>
            <person name="Fantinatti F."/>
            <person name="Farias I.P."/>
            <person name="Felipe M.S.S."/>
            <person name="Ferrari L.P."/>
            <person name="Ferro J.A."/>
            <person name="Ferro M.I.T."/>
            <person name="Franco G.R."/>
            <person name="Freitas N.S.A."/>
            <person name="Furlan L.R."/>
            <person name="Gazzinelli R.T."/>
            <person name="Gomes E.A."/>
            <person name="Goncalves P.R."/>
            <person name="Grangeiro T.B."/>
            <person name="Grattapaglia D."/>
            <person name="Grisard E.C."/>
            <person name="Hanna E.S."/>
            <person name="Jardim S.N."/>
            <person name="Laurino J."/>
            <person name="Leoi L.C.T."/>
            <person name="Lima L.F.A."/>
            <person name="Loureiro M.F."/>
            <person name="Lyra M.C.C.P."/>
            <person name="Madeira H.M.F."/>
            <person name="Manfio G.P."/>
            <person name="Maranhao A.Q."/>
            <person name="Martins W.S."/>
            <person name="di Mauro S.M.Z."/>
            <person name="de Medeiros S.R.B."/>
            <person name="Meissner R.V."/>
            <person name="Moreira M.A.M."/>
            <person name="Nascimento F.F."/>
            <person name="Nicolas M.F."/>
            <person name="Oliveira J.G."/>
            <person name="Oliveira S.C."/>
            <person name="Paixao R.F.C."/>
            <person name="Parente J.A."/>
            <person name="Pedrosa F.O."/>
            <person name="Pena S.D.J."/>
            <person name="Pereira J.O."/>
            <person name="Pereira M."/>
            <person name="Pinto L.S.R.C."/>
            <person name="Pinto L.S."/>
            <person name="Porto J.I.R."/>
            <person name="Potrich D.P."/>
            <person name="Ramalho-Neto C.E."/>
            <person name="Reis A.M.M."/>
            <person name="Rigo L.U."/>
            <person name="Rondinelli E."/>
            <person name="Santos E.B.P."/>
            <person name="Santos F.R."/>
            <person name="Schneider M.P.C."/>
            <person name="Seuanez H.N."/>
            <person name="Silva A.M.R."/>
            <person name="da Silva A.L.C."/>
            <person name="Silva D.W."/>
            <person name="Silva R."/>
            <person name="Simoes I.C."/>
            <person name="Simon D."/>
            <person name="Soares C.M.A."/>
            <person name="Soares R.B.A."/>
            <person name="Souza E.M."/>
            <person name="Souza K.R.L."/>
            <person name="Souza R.C."/>
            <person name="Steffens M.B.R."/>
            <person name="Steindel M."/>
            <person name="Teixeira S.R."/>
            <person name="Urmenyi T."/>
            <person name="Vettore A."/>
            <person name="Wassem R."/>
            <person name="Zaha A."/>
            <person name="Simpson A.J.G."/>
        </authorList>
    </citation>
    <scope>NUCLEOTIDE SEQUENCE [LARGE SCALE GENOMIC DNA]</scope>
    <source>
        <strain>ATCC 12472 / DSM 30191 / JCM 1249 / CCUG 213 / NBRC 12614 / NCIMB 9131 / NCTC 9757 / MK</strain>
    </source>
</reference>
<dbReference type="EC" id="2.1.1.195" evidence="1"/>
<dbReference type="EMBL" id="AE016825">
    <property type="protein sequence ID" value="AAQ59242.1"/>
    <property type="molecule type" value="Genomic_DNA"/>
</dbReference>
<dbReference type="RefSeq" id="WP_011135118.1">
    <property type="nucleotide sequence ID" value="NC_005085.1"/>
</dbReference>
<dbReference type="SMR" id="Q7NXR0"/>
<dbReference type="STRING" id="243365.CV_1566"/>
<dbReference type="KEGG" id="cvi:CV_1566"/>
<dbReference type="eggNOG" id="COG1903">
    <property type="taxonomic scope" value="Bacteria"/>
</dbReference>
<dbReference type="HOGENOM" id="CLU_041273_1_0_4"/>
<dbReference type="OrthoDB" id="6439987at2"/>
<dbReference type="UniPathway" id="UPA00148">
    <property type="reaction ID" value="UER00227"/>
</dbReference>
<dbReference type="Proteomes" id="UP000001424">
    <property type="component" value="Chromosome"/>
</dbReference>
<dbReference type="GO" id="GO:0043780">
    <property type="term" value="F:cobalt-precorrin-5B C1-methyltransferase activity"/>
    <property type="evidence" value="ECO:0007669"/>
    <property type="project" value="RHEA"/>
</dbReference>
<dbReference type="GO" id="GO:0019251">
    <property type="term" value="P:anaerobic cobalamin biosynthetic process"/>
    <property type="evidence" value="ECO:0007669"/>
    <property type="project" value="UniProtKB-UniRule"/>
</dbReference>
<dbReference type="GO" id="GO:0032259">
    <property type="term" value="P:methylation"/>
    <property type="evidence" value="ECO:0007669"/>
    <property type="project" value="UniProtKB-KW"/>
</dbReference>
<dbReference type="Gene3D" id="3.30.2110.10">
    <property type="entry name" value="CbiD-like"/>
    <property type="match status" value="1"/>
</dbReference>
<dbReference type="HAMAP" id="MF_00787">
    <property type="entry name" value="CbiD"/>
    <property type="match status" value="1"/>
</dbReference>
<dbReference type="InterPro" id="IPR002748">
    <property type="entry name" value="CbiD"/>
</dbReference>
<dbReference type="InterPro" id="IPR036074">
    <property type="entry name" value="CbiD_sf"/>
</dbReference>
<dbReference type="NCBIfam" id="TIGR00312">
    <property type="entry name" value="cbiD"/>
    <property type="match status" value="1"/>
</dbReference>
<dbReference type="PANTHER" id="PTHR35863">
    <property type="entry name" value="COBALT-PRECORRIN-5B C(1)-METHYLTRANSFERASE"/>
    <property type="match status" value="1"/>
</dbReference>
<dbReference type="PANTHER" id="PTHR35863:SF1">
    <property type="entry name" value="COBALT-PRECORRIN-5B C(1)-METHYLTRANSFERASE"/>
    <property type="match status" value="1"/>
</dbReference>
<dbReference type="Pfam" id="PF01888">
    <property type="entry name" value="CbiD"/>
    <property type="match status" value="1"/>
</dbReference>
<dbReference type="PIRSF" id="PIRSF026782">
    <property type="entry name" value="CbiD"/>
    <property type="match status" value="1"/>
</dbReference>
<dbReference type="SUPFAM" id="SSF111342">
    <property type="entry name" value="CbiD-like"/>
    <property type="match status" value="1"/>
</dbReference>
<comment type="function">
    <text evidence="1">Catalyzes the methylation of C-1 in cobalt-precorrin-5B to form cobalt-precorrin-6A.</text>
</comment>
<comment type="catalytic activity">
    <reaction evidence="1">
        <text>Co-precorrin-5B + S-adenosyl-L-methionine = Co-precorrin-6A + S-adenosyl-L-homocysteine</text>
        <dbReference type="Rhea" id="RHEA:26285"/>
        <dbReference type="ChEBI" id="CHEBI:57856"/>
        <dbReference type="ChEBI" id="CHEBI:59789"/>
        <dbReference type="ChEBI" id="CHEBI:60063"/>
        <dbReference type="ChEBI" id="CHEBI:60064"/>
        <dbReference type="EC" id="2.1.1.195"/>
    </reaction>
</comment>
<comment type="pathway">
    <text evidence="1">Cofactor biosynthesis; adenosylcobalamin biosynthesis; cob(II)yrinate a,c-diamide from sirohydrochlorin (anaerobic route): step 6/10.</text>
</comment>
<comment type="similarity">
    <text evidence="1">Belongs to the CbiD family.</text>
</comment>
<evidence type="ECO:0000255" key="1">
    <source>
        <dbReference type="HAMAP-Rule" id="MF_00787"/>
    </source>
</evidence>
<evidence type="ECO:0000256" key="2">
    <source>
        <dbReference type="SAM" id="MobiDB-lite"/>
    </source>
</evidence>
<gene>
    <name evidence="1" type="primary">cbiD</name>
    <name type="ordered locus">CV_1566</name>
</gene>
<accession>Q7NXR0</accession>
<sequence length="377" mass="39916">MNPVRQPYDLAAPAPNGMRRGRTTGSCATAAVKAALMLLLDGVDADEVFISLPDPDFYLAVPVESVAWLDENTVRAEVLKYAGDDPDNTDGATIFAEVKLNSSGALRFLAAPGVGMVTQPGLRIPPGEPAINPVPRQMMRMAVDEVLAGRPDPGIDLAIGCVDGDKIAKRTFNPMLGIVGGISILGTSGIVEPMSQAAWIASIEVYVRVALGELPPAIAFTPGKIGRGYAADTLGLEKKQVVQIANFVGDSLDFAESVLIEQGRILDTLWVLGHPGKIAKLLDGVWDTHSGKSGMAMDAVAGVAADLGYPSELVAQIKQANTVENVVQIMNSQPDTRGYWMEIERRTAARMATKVPSVRQVAVRLFSMDGTPLGEAA</sequence>